<dbReference type="EMBL" id="D84670">
    <property type="protein sequence ID" value="BAA25166.1"/>
    <property type="molecule type" value="Genomic_DNA"/>
</dbReference>
<dbReference type="EMBL" id="AF052598">
    <property type="protein sequence ID" value="AAC34999.1"/>
    <property type="molecule type" value="Genomic_DNA"/>
</dbReference>
<dbReference type="EMBL" id="AE009950">
    <property type="protein sequence ID" value="AAL80145.1"/>
    <property type="status" value="ALT_INIT"/>
    <property type="molecule type" value="Genomic_DNA"/>
</dbReference>
<dbReference type="PIR" id="T43936">
    <property type="entry name" value="T43936"/>
</dbReference>
<dbReference type="SMR" id="P81415"/>
<dbReference type="STRING" id="186497.PF0021"/>
<dbReference type="PaxDb" id="186497-PF0021"/>
<dbReference type="KEGG" id="pfu:PF0021"/>
<dbReference type="PATRIC" id="fig|186497.12.peg.23"/>
<dbReference type="eggNOG" id="arCOG00417">
    <property type="taxonomic scope" value="Archaea"/>
</dbReference>
<dbReference type="HOGENOM" id="CLU_041732_2_0_2"/>
<dbReference type="OrthoDB" id="17644at2157"/>
<dbReference type="PhylomeDB" id="P81415"/>
<dbReference type="Proteomes" id="UP000001013">
    <property type="component" value="Chromosome"/>
</dbReference>
<dbReference type="GO" id="GO:0005524">
    <property type="term" value="F:ATP binding"/>
    <property type="evidence" value="ECO:0007669"/>
    <property type="project" value="UniProtKB-UniRule"/>
</dbReference>
<dbReference type="GO" id="GO:0016887">
    <property type="term" value="F:ATP hydrolysis activity"/>
    <property type="evidence" value="ECO:0007669"/>
    <property type="project" value="InterPro"/>
</dbReference>
<dbReference type="GO" id="GO:0140664">
    <property type="term" value="F:ATP-dependent DNA damage sensor activity"/>
    <property type="evidence" value="ECO:0007669"/>
    <property type="project" value="InterPro"/>
</dbReference>
<dbReference type="GO" id="GO:0003684">
    <property type="term" value="F:damaged DNA binding"/>
    <property type="evidence" value="ECO:0007669"/>
    <property type="project" value="UniProtKB-UniRule"/>
</dbReference>
<dbReference type="GO" id="GO:0006310">
    <property type="term" value="P:DNA recombination"/>
    <property type="evidence" value="ECO:0007669"/>
    <property type="project" value="UniProtKB-UniRule"/>
</dbReference>
<dbReference type="GO" id="GO:0006281">
    <property type="term" value="P:DNA repair"/>
    <property type="evidence" value="ECO:0007669"/>
    <property type="project" value="UniProtKB-UniRule"/>
</dbReference>
<dbReference type="Gene3D" id="3.40.50.300">
    <property type="entry name" value="P-loop containing nucleotide triphosphate hydrolases"/>
    <property type="match status" value="1"/>
</dbReference>
<dbReference type="HAMAP" id="MF_00350">
    <property type="entry name" value="RadB"/>
    <property type="match status" value="1"/>
</dbReference>
<dbReference type="InterPro" id="IPR003593">
    <property type="entry name" value="AAA+_ATPase"/>
</dbReference>
<dbReference type="InterPro" id="IPR013632">
    <property type="entry name" value="DNA_recomb/repair_Rad51_C"/>
</dbReference>
<dbReference type="InterPro" id="IPR011939">
    <property type="entry name" value="DNA_repair_and_recomb_RadB"/>
</dbReference>
<dbReference type="InterPro" id="IPR027417">
    <property type="entry name" value="P-loop_NTPase"/>
</dbReference>
<dbReference type="InterPro" id="IPR020588">
    <property type="entry name" value="RecA_ATP-bd"/>
</dbReference>
<dbReference type="NCBIfam" id="TIGR02237">
    <property type="entry name" value="recomb_radB"/>
    <property type="match status" value="1"/>
</dbReference>
<dbReference type="PANTHER" id="PTHR22942:SF47">
    <property type="entry name" value="DNA REPAIR AND RECOMBINATION PROTEIN RADB"/>
    <property type="match status" value="1"/>
</dbReference>
<dbReference type="PANTHER" id="PTHR22942">
    <property type="entry name" value="RECA/RAD51/RADA DNA STRAND-PAIRING FAMILY MEMBER"/>
    <property type="match status" value="1"/>
</dbReference>
<dbReference type="Pfam" id="PF08423">
    <property type="entry name" value="Rad51"/>
    <property type="match status" value="1"/>
</dbReference>
<dbReference type="PIRSF" id="PIRSF003336">
    <property type="entry name" value="RadB"/>
    <property type="match status" value="1"/>
</dbReference>
<dbReference type="PRINTS" id="PR01874">
    <property type="entry name" value="DNAREPAIRADA"/>
</dbReference>
<dbReference type="SMART" id="SM00382">
    <property type="entry name" value="AAA"/>
    <property type="match status" value="1"/>
</dbReference>
<dbReference type="SUPFAM" id="SSF52540">
    <property type="entry name" value="P-loop containing nucleoside triphosphate hydrolases"/>
    <property type="match status" value="1"/>
</dbReference>
<dbReference type="PROSITE" id="PS50162">
    <property type="entry name" value="RECA_2"/>
    <property type="match status" value="1"/>
</dbReference>
<reference key="1">
    <citation type="journal article" date="1997" name="Genes Cells">
        <title>A novel DNA polymerase in the hyperthermophilic archaeon, Pyrococcus furiosus: gene cloning, expression, and characterization.</title>
        <authorList>
            <person name="Uemori T."/>
            <person name="Sato Y."/>
            <person name="Kato I."/>
            <person name="Doi H."/>
            <person name="Ishino Y."/>
        </authorList>
    </citation>
    <scope>NUCLEOTIDE SEQUENCE [GENOMIC DNA]</scope>
    <source>
        <strain>ATCC 43587 / DSM 3638 / JCM 8422 / Vc1</strain>
    </source>
</reference>
<reference key="2">
    <citation type="journal article" date="1999" name="J. Mol. Evol.">
        <title>DNA repair systems in archaea: mementos from the last universal common ancestor?</title>
        <authorList>
            <person name="DiRuggiero J."/>
            <person name="Brown J.R."/>
            <person name="Bogert A.P."/>
            <person name="Robb F.T."/>
        </authorList>
    </citation>
    <scope>NUCLEOTIDE SEQUENCE [GENOMIC DNA]</scope>
    <source>
        <strain>ATCC 43587 / DSM 3638 / JCM 8422 / Vc1</strain>
    </source>
</reference>
<reference key="3">
    <citation type="journal article" date="1999" name="Genetics">
        <title>Divergence of the hyperthermophilic archaea Pyrococcus furiosus and P. horikoshii inferred from complete genomic sequences.</title>
        <authorList>
            <person name="Maeder D.L."/>
            <person name="Weiss R.B."/>
            <person name="Dunn D.M."/>
            <person name="Cherry J.L."/>
            <person name="Gonzalez J.M."/>
            <person name="DiRuggiero J."/>
            <person name="Robb F.T."/>
        </authorList>
    </citation>
    <scope>NUCLEOTIDE SEQUENCE [LARGE SCALE GENOMIC DNA]</scope>
    <source>
        <strain>ATCC 43587 / DSM 3638 / JCM 8422 / Vc1</strain>
    </source>
</reference>
<reference key="4">
    <citation type="journal article" date="2000" name="J. Biol. Chem.">
        <title>Both RadA and RadB are involved in homologous recombination in Pyrococcus furiosus.</title>
        <authorList>
            <person name="Komori K."/>
            <person name="Miyata T."/>
            <person name="DiRuggiero J."/>
            <person name="Holley-Shanks R."/>
            <person name="Hayashi I."/>
            <person name="Cann I.K.O."/>
            <person name="Mayanagi K."/>
            <person name="Shinagawa H."/>
            <person name="Ishino Y."/>
        </authorList>
    </citation>
    <scope>CHARACTERIZATION</scope>
    <source>
        <strain>ATCC 43587 / DSM 3638 / JCM 8422 / Vc1</strain>
    </source>
</reference>
<gene>
    <name type="primary">radB</name>
    <name type="ordered locus">PF0021</name>
</gene>
<name>RADB_PYRFU</name>
<proteinExistence type="evidence at protein level"/>
<comment type="function">
    <text>Involved in DNA repair and in homologous recombination. May regulate the cleavage reactions of the branch-structured DNA. Has a very weak ATPase activity that is not stimulated by DNA. Binds DNA but does not promote DNA strands exchange.</text>
</comment>
<comment type="similarity">
    <text evidence="2">Belongs to the eukaryotic RecA-like protein family. RadB subfamily.</text>
</comment>
<comment type="sequence caution" evidence="2">
    <conflict type="erroneous initiation">
        <sequence resource="EMBL-CDS" id="AAL80145"/>
    </conflict>
</comment>
<organism>
    <name type="scientific">Pyrococcus furiosus (strain ATCC 43587 / DSM 3638 / JCM 8422 / Vc1)</name>
    <dbReference type="NCBI Taxonomy" id="186497"/>
    <lineage>
        <taxon>Archaea</taxon>
        <taxon>Methanobacteriati</taxon>
        <taxon>Methanobacteriota</taxon>
        <taxon>Thermococci</taxon>
        <taxon>Thermococcales</taxon>
        <taxon>Thermococcaceae</taxon>
        <taxon>Pyrococcus</taxon>
    </lineage>
</organism>
<sequence>MLNTELLTTGVKGLDELLGGGVAKGVILQVYGPFATGKTTFAMQVGLLNEGKVAYVDTEGGFSPERLAQMAESRNLDVEKALEKFVIFEPMDLNEQRQVIARLKNIVNEKFSLVVVDSFTAHYRAEGSREYGELSKQLQVLQWIARRKNVAVIVVNQVYYDSNSGILKPIAEHTLGYKTKDILRFERLRVGVRIAVLERHRFRPEGGMVYFKITDKGLEDVKNED</sequence>
<keyword id="KW-0067">ATP-binding</keyword>
<keyword id="KW-0227">DNA damage</keyword>
<keyword id="KW-0233">DNA recombination</keyword>
<keyword id="KW-0238">DNA-binding</keyword>
<keyword id="KW-0547">Nucleotide-binding</keyword>
<keyword id="KW-1185">Reference proteome</keyword>
<feature type="chain" id="PRO_0000150117" description="DNA repair and recombination protein RadB">
    <location>
        <begin position="1"/>
        <end position="225"/>
    </location>
</feature>
<feature type="binding site" evidence="1">
    <location>
        <begin position="32"/>
        <end position="39"/>
    </location>
    <ligand>
        <name>ATP</name>
        <dbReference type="ChEBI" id="CHEBI:30616"/>
    </ligand>
</feature>
<accession>P81415</accession>
<evidence type="ECO:0000255" key="1"/>
<evidence type="ECO:0000305" key="2"/>
<protein>
    <recommendedName>
        <fullName>DNA repair and recombination protein RadB</fullName>
    </recommendedName>
</protein>